<evidence type="ECO:0000255" key="1">
    <source>
        <dbReference type="HAMAP-Rule" id="MF_00111"/>
    </source>
</evidence>
<proteinExistence type="inferred from homology"/>
<accession>A1WYW6</accession>
<gene>
    <name evidence="1" type="primary">murA</name>
    <name type="ordered locus">Hhal_2114</name>
</gene>
<feature type="chain" id="PRO_1000023042" description="UDP-N-acetylglucosamine 1-carboxyvinyltransferase">
    <location>
        <begin position="1"/>
        <end position="418"/>
    </location>
</feature>
<feature type="active site" description="Proton donor" evidence="1">
    <location>
        <position position="117"/>
    </location>
</feature>
<feature type="binding site" evidence="1">
    <location>
        <begin position="22"/>
        <end position="23"/>
    </location>
    <ligand>
        <name>phosphoenolpyruvate</name>
        <dbReference type="ChEBI" id="CHEBI:58702"/>
    </ligand>
</feature>
<feature type="binding site" evidence="1">
    <location>
        <position position="93"/>
    </location>
    <ligand>
        <name>UDP-N-acetyl-alpha-D-glucosamine</name>
        <dbReference type="ChEBI" id="CHEBI:57705"/>
    </ligand>
</feature>
<feature type="binding site" evidence="1">
    <location>
        <position position="305"/>
    </location>
    <ligand>
        <name>UDP-N-acetyl-alpha-D-glucosamine</name>
        <dbReference type="ChEBI" id="CHEBI:57705"/>
    </ligand>
</feature>
<feature type="binding site" evidence="1">
    <location>
        <position position="327"/>
    </location>
    <ligand>
        <name>UDP-N-acetyl-alpha-D-glucosamine</name>
        <dbReference type="ChEBI" id="CHEBI:57705"/>
    </ligand>
</feature>
<feature type="modified residue" description="2-(S-cysteinyl)pyruvic acid O-phosphothioketal" evidence="1">
    <location>
        <position position="117"/>
    </location>
</feature>
<name>MURA_HALHL</name>
<sequence length="418" mass="44750">MERLLIRGGNPLRGDIRISGAKNAALPVMAATLLADGPTTVGNIPHLHDVTTTMELLGRMGVELTVHEGMEVEVNTATIHSFRAPYELVKTMRASILVLGPLLARFGQAEVSLPGGCAIGSRPVNIHVDGLRAMGAEIEVRDGYIKGRADRLQGAHIRMDVSTVTGTENLMMAAALARGTTVLENAAREPEVINLADCINAMGGHVQGAGTSTITIEGVDTLRGVHHRVLPDRIETGTYLVAAAMTGGEVRLKDTAPELVESVLGKLRESGAEVSAGRDWVTLRMEGRPRAVDLETAPYPGFPTDMQAQFCALNAISTGEGTVTETVFENRFMHCLEMQRMGADIQIEGARARIRGVEKLTAAPVIATDLRASASLVLAGLVAEGETRVDRIYHIDRGYECIEEKLAQLGADIQRVPD</sequence>
<keyword id="KW-0131">Cell cycle</keyword>
<keyword id="KW-0132">Cell division</keyword>
<keyword id="KW-0133">Cell shape</keyword>
<keyword id="KW-0961">Cell wall biogenesis/degradation</keyword>
<keyword id="KW-0963">Cytoplasm</keyword>
<keyword id="KW-0573">Peptidoglycan synthesis</keyword>
<keyword id="KW-0670">Pyruvate</keyword>
<keyword id="KW-1185">Reference proteome</keyword>
<keyword id="KW-0808">Transferase</keyword>
<dbReference type="EC" id="2.5.1.7" evidence="1"/>
<dbReference type="EMBL" id="CP000544">
    <property type="protein sequence ID" value="ABM62878.1"/>
    <property type="molecule type" value="Genomic_DNA"/>
</dbReference>
<dbReference type="RefSeq" id="WP_011814900.1">
    <property type="nucleotide sequence ID" value="NC_008789.1"/>
</dbReference>
<dbReference type="SMR" id="A1WYW6"/>
<dbReference type="STRING" id="349124.Hhal_2114"/>
<dbReference type="KEGG" id="hha:Hhal_2114"/>
<dbReference type="eggNOG" id="COG0766">
    <property type="taxonomic scope" value="Bacteria"/>
</dbReference>
<dbReference type="HOGENOM" id="CLU_027387_0_0_6"/>
<dbReference type="OrthoDB" id="9803760at2"/>
<dbReference type="UniPathway" id="UPA00219"/>
<dbReference type="Proteomes" id="UP000000647">
    <property type="component" value="Chromosome"/>
</dbReference>
<dbReference type="GO" id="GO:0005737">
    <property type="term" value="C:cytoplasm"/>
    <property type="evidence" value="ECO:0007669"/>
    <property type="project" value="UniProtKB-SubCell"/>
</dbReference>
<dbReference type="GO" id="GO:0008760">
    <property type="term" value="F:UDP-N-acetylglucosamine 1-carboxyvinyltransferase activity"/>
    <property type="evidence" value="ECO:0007669"/>
    <property type="project" value="UniProtKB-UniRule"/>
</dbReference>
<dbReference type="GO" id="GO:0051301">
    <property type="term" value="P:cell division"/>
    <property type="evidence" value="ECO:0007669"/>
    <property type="project" value="UniProtKB-KW"/>
</dbReference>
<dbReference type="GO" id="GO:0071555">
    <property type="term" value="P:cell wall organization"/>
    <property type="evidence" value="ECO:0007669"/>
    <property type="project" value="UniProtKB-KW"/>
</dbReference>
<dbReference type="GO" id="GO:0009252">
    <property type="term" value="P:peptidoglycan biosynthetic process"/>
    <property type="evidence" value="ECO:0007669"/>
    <property type="project" value="UniProtKB-UniRule"/>
</dbReference>
<dbReference type="GO" id="GO:0008360">
    <property type="term" value="P:regulation of cell shape"/>
    <property type="evidence" value="ECO:0007669"/>
    <property type="project" value="UniProtKB-KW"/>
</dbReference>
<dbReference type="GO" id="GO:0019277">
    <property type="term" value="P:UDP-N-acetylgalactosamine biosynthetic process"/>
    <property type="evidence" value="ECO:0007669"/>
    <property type="project" value="InterPro"/>
</dbReference>
<dbReference type="CDD" id="cd01555">
    <property type="entry name" value="UdpNAET"/>
    <property type="match status" value="1"/>
</dbReference>
<dbReference type="FunFam" id="3.65.10.10:FF:000001">
    <property type="entry name" value="UDP-N-acetylglucosamine 1-carboxyvinyltransferase"/>
    <property type="match status" value="1"/>
</dbReference>
<dbReference type="Gene3D" id="3.65.10.10">
    <property type="entry name" value="Enolpyruvate transferase domain"/>
    <property type="match status" value="2"/>
</dbReference>
<dbReference type="HAMAP" id="MF_00111">
    <property type="entry name" value="MurA"/>
    <property type="match status" value="1"/>
</dbReference>
<dbReference type="InterPro" id="IPR001986">
    <property type="entry name" value="Enolpyruvate_Tfrase_dom"/>
</dbReference>
<dbReference type="InterPro" id="IPR036968">
    <property type="entry name" value="Enolpyruvate_Tfrase_sf"/>
</dbReference>
<dbReference type="InterPro" id="IPR050068">
    <property type="entry name" value="MurA_subfamily"/>
</dbReference>
<dbReference type="InterPro" id="IPR013792">
    <property type="entry name" value="RNA3'P_cycl/enolpyr_Trfase_a/b"/>
</dbReference>
<dbReference type="InterPro" id="IPR005750">
    <property type="entry name" value="UDP_GlcNAc_COvinyl_MurA"/>
</dbReference>
<dbReference type="NCBIfam" id="TIGR01072">
    <property type="entry name" value="murA"/>
    <property type="match status" value="1"/>
</dbReference>
<dbReference type="NCBIfam" id="NF006873">
    <property type="entry name" value="PRK09369.1"/>
    <property type="match status" value="1"/>
</dbReference>
<dbReference type="PANTHER" id="PTHR43783">
    <property type="entry name" value="UDP-N-ACETYLGLUCOSAMINE 1-CARBOXYVINYLTRANSFERASE"/>
    <property type="match status" value="1"/>
</dbReference>
<dbReference type="PANTHER" id="PTHR43783:SF1">
    <property type="entry name" value="UDP-N-ACETYLGLUCOSAMINE 1-CARBOXYVINYLTRANSFERASE"/>
    <property type="match status" value="1"/>
</dbReference>
<dbReference type="Pfam" id="PF00275">
    <property type="entry name" value="EPSP_synthase"/>
    <property type="match status" value="1"/>
</dbReference>
<dbReference type="SUPFAM" id="SSF55205">
    <property type="entry name" value="EPT/RTPC-like"/>
    <property type="match status" value="1"/>
</dbReference>
<comment type="function">
    <text evidence="1">Cell wall formation. Adds enolpyruvyl to UDP-N-acetylglucosamine.</text>
</comment>
<comment type="catalytic activity">
    <reaction evidence="1">
        <text>phosphoenolpyruvate + UDP-N-acetyl-alpha-D-glucosamine = UDP-N-acetyl-3-O-(1-carboxyvinyl)-alpha-D-glucosamine + phosphate</text>
        <dbReference type="Rhea" id="RHEA:18681"/>
        <dbReference type="ChEBI" id="CHEBI:43474"/>
        <dbReference type="ChEBI" id="CHEBI:57705"/>
        <dbReference type="ChEBI" id="CHEBI:58702"/>
        <dbReference type="ChEBI" id="CHEBI:68483"/>
        <dbReference type="EC" id="2.5.1.7"/>
    </reaction>
</comment>
<comment type="pathway">
    <text evidence="1">Cell wall biogenesis; peptidoglycan biosynthesis.</text>
</comment>
<comment type="subcellular location">
    <subcellularLocation>
        <location evidence="1">Cytoplasm</location>
    </subcellularLocation>
</comment>
<comment type="similarity">
    <text evidence="1">Belongs to the EPSP synthase family. MurA subfamily.</text>
</comment>
<reference key="1">
    <citation type="submission" date="2006-12" db="EMBL/GenBank/DDBJ databases">
        <title>Complete sequence of Halorhodospira halophila SL1.</title>
        <authorList>
            <consortium name="US DOE Joint Genome Institute"/>
            <person name="Copeland A."/>
            <person name="Lucas S."/>
            <person name="Lapidus A."/>
            <person name="Barry K."/>
            <person name="Detter J.C."/>
            <person name="Glavina del Rio T."/>
            <person name="Hammon N."/>
            <person name="Israni S."/>
            <person name="Dalin E."/>
            <person name="Tice H."/>
            <person name="Pitluck S."/>
            <person name="Saunders E."/>
            <person name="Brettin T."/>
            <person name="Bruce D."/>
            <person name="Han C."/>
            <person name="Tapia R."/>
            <person name="Schmutz J."/>
            <person name="Larimer F."/>
            <person name="Land M."/>
            <person name="Hauser L."/>
            <person name="Kyrpides N."/>
            <person name="Mikhailova N."/>
            <person name="Hoff W."/>
            <person name="Richardson P."/>
        </authorList>
    </citation>
    <scope>NUCLEOTIDE SEQUENCE [LARGE SCALE GENOMIC DNA]</scope>
    <source>
        <strain>DSM 244 / SL1</strain>
    </source>
</reference>
<protein>
    <recommendedName>
        <fullName evidence="1">UDP-N-acetylglucosamine 1-carboxyvinyltransferase</fullName>
        <ecNumber evidence="1">2.5.1.7</ecNumber>
    </recommendedName>
    <alternativeName>
        <fullName evidence="1">Enoylpyruvate transferase</fullName>
    </alternativeName>
    <alternativeName>
        <fullName evidence="1">UDP-N-acetylglucosamine enolpyruvyl transferase</fullName>
        <shortName evidence="1">EPT</shortName>
    </alternativeName>
</protein>
<organism>
    <name type="scientific">Halorhodospira halophila (strain DSM 244 / SL1)</name>
    <name type="common">Ectothiorhodospira halophila (strain DSM 244 / SL1)</name>
    <dbReference type="NCBI Taxonomy" id="349124"/>
    <lineage>
        <taxon>Bacteria</taxon>
        <taxon>Pseudomonadati</taxon>
        <taxon>Pseudomonadota</taxon>
        <taxon>Gammaproteobacteria</taxon>
        <taxon>Chromatiales</taxon>
        <taxon>Ectothiorhodospiraceae</taxon>
        <taxon>Halorhodospira</taxon>
    </lineage>
</organism>